<protein>
    <recommendedName>
        <fullName evidence="1">Apolipoprotein N-acyltransferase</fullName>
        <shortName evidence="1">ALP N-acyltransferase</shortName>
        <ecNumber evidence="1">2.3.1.269</ecNumber>
    </recommendedName>
</protein>
<feature type="chain" id="PRO_0000178099" description="Apolipoprotein N-acyltransferase">
    <location>
        <begin position="1"/>
        <end position="506"/>
    </location>
</feature>
<feature type="transmembrane region" description="Helical" evidence="1">
    <location>
        <begin position="10"/>
        <end position="30"/>
    </location>
</feature>
<feature type="transmembrane region" description="Helical" evidence="1">
    <location>
        <begin position="33"/>
        <end position="53"/>
    </location>
</feature>
<feature type="transmembrane region" description="Helical" evidence="1">
    <location>
        <begin position="57"/>
        <end position="77"/>
    </location>
</feature>
<feature type="transmembrane region" description="Helical" evidence="1">
    <location>
        <begin position="105"/>
        <end position="125"/>
    </location>
</feature>
<feature type="transmembrane region" description="Helical" evidence="1">
    <location>
        <begin position="139"/>
        <end position="159"/>
    </location>
</feature>
<feature type="transmembrane region" description="Helical" evidence="1">
    <location>
        <begin position="176"/>
        <end position="196"/>
    </location>
</feature>
<feature type="transmembrane region" description="Helical" evidence="1">
    <location>
        <begin position="205"/>
        <end position="225"/>
    </location>
</feature>
<feature type="transmembrane region" description="Helical" evidence="1">
    <location>
        <begin position="483"/>
        <end position="500"/>
    </location>
</feature>
<feature type="domain" description="CN hydrolase" evidence="1">
    <location>
        <begin position="238"/>
        <end position="473"/>
    </location>
</feature>
<feature type="active site" description="Proton acceptor" evidence="1">
    <location>
        <position position="279"/>
    </location>
</feature>
<feature type="active site" evidence="1">
    <location>
        <position position="336"/>
    </location>
</feature>
<feature type="active site" description="Nucleophile" evidence="1">
    <location>
        <position position="385"/>
    </location>
</feature>
<gene>
    <name evidence="1" type="primary">lnt</name>
    <name type="ordered locus">tll1667</name>
</gene>
<keyword id="KW-0012">Acyltransferase</keyword>
<keyword id="KW-0997">Cell inner membrane</keyword>
<keyword id="KW-1003">Cell membrane</keyword>
<keyword id="KW-0472">Membrane</keyword>
<keyword id="KW-1185">Reference proteome</keyword>
<keyword id="KW-0808">Transferase</keyword>
<keyword id="KW-0812">Transmembrane</keyword>
<keyword id="KW-1133">Transmembrane helix</keyword>
<accession>Q8DIC3</accession>
<proteinExistence type="inferred from homology"/>
<comment type="function">
    <text evidence="1">Catalyzes the phospholipid dependent N-acylation of the N-terminal cysteine of apolipoprotein, the last step in lipoprotein maturation.</text>
</comment>
<comment type="catalytic activity">
    <reaction evidence="1">
        <text>N-terminal S-1,2-diacyl-sn-glyceryl-L-cysteinyl-[lipoprotein] + a glycerophospholipid = N-acyl-S-1,2-diacyl-sn-glyceryl-L-cysteinyl-[lipoprotein] + a 2-acyl-sn-glycero-3-phospholipid + H(+)</text>
        <dbReference type="Rhea" id="RHEA:48228"/>
        <dbReference type="Rhea" id="RHEA-COMP:14681"/>
        <dbReference type="Rhea" id="RHEA-COMP:14684"/>
        <dbReference type="ChEBI" id="CHEBI:15378"/>
        <dbReference type="ChEBI" id="CHEBI:136912"/>
        <dbReference type="ChEBI" id="CHEBI:140656"/>
        <dbReference type="ChEBI" id="CHEBI:140657"/>
        <dbReference type="ChEBI" id="CHEBI:140660"/>
        <dbReference type="EC" id="2.3.1.269"/>
    </reaction>
</comment>
<comment type="pathway">
    <text evidence="1">Protein modification; lipoprotein biosynthesis (N-acyl transfer).</text>
</comment>
<comment type="subcellular location">
    <subcellularLocation>
        <location evidence="1">Cell inner membrane</location>
        <topology evidence="1">Multi-pass membrane protein</topology>
    </subcellularLocation>
</comment>
<comment type="similarity">
    <text evidence="1">Belongs to the CN hydrolase family. Apolipoprotein N-acyltransferase subfamily.</text>
</comment>
<name>LNT_THEVB</name>
<evidence type="ECO:0000255" key="1">
    <source>
        <dbReference type="HAMAP-Rule" id="MF_01148"/>
    </source>
</evidence>
<dbReference type="EC" id="2.3.1.269" evidence="1"/>
<dbReference type="EMBL" id="BA000039">
    <property type="protein sequence ID" value="BAC09219.1"/>
    <property type="molecule type" value="Genomic_DNA"/>
</dbReference>
<dbReference type="RefSeq" id="NP_682457.1">
    <property type="nucleotide sequence ID" value="NC_004113.1"/>
</dbReference>
<dbReference type="RefSeq" id="WP_011057504.1">
    <property type="nucleotide sequence ID" value="NC_004113.1"/>
</dbReference>
<dbReference type="SMR" id="Q8DIC3"/>
<dbReference type="STRING" id="197221.gene:10748269"/>
<dbReference type="EnsemblBacteria" id="BAC09219">
    <property type="protein sequence ID" value="BAC09219"/>
    <property type="gene ID" value="BAC09219"/>
</dbReference>
<dbReference type="KEGG" id="tel:tll1667"/>
<dbReference type="PATRIC" id="fig|197221.4.peg.1748"/>
<dbReference type="eggNOG" id="COG0815">
    <property type="taxonomic scope" value="Bacteria"/>
</dbReference>
<dbReference type="UniPathway" id="UPA00666"/>
<dbReference type="Proteomes" id="UP000000440">
    <property type="component" value="Chromosome"/>
</dbReference>
<dbReference type="GO" id="GO:0005886">
    <property type="term" value="C:plasma membrane"/>
    <property type="evidence" value="ECO:0007669"/>
    <property type="project" value="UniProtKB-SubCell"/>
</dbReference>
<dbReference type="GO" id="GO:0016410">
    <property type="term" value="F:N-acyltransferase activity"/>
    <property type="evidence" value="ECO:0007669"/>
    <property type="project" value="UniProtKB-UniRule"/>
</dbReference>
<dbReference type="GO" id="GO:0042158">
    <property type="term" value="P:lipoprotein biosynthetic process"/>
    <property type="evidence" value="ECO:0007669"/>
    <property type="project" value="UniProtKB-UniRule"/>
</dbReference>
<dbReference type="CDD" id="cd07571">
    <property type="entry name" value="ALP_N-acyl_transferase"/>
    <property type="match status" value="1"/>
</dbReference>
<dbReference type="Gene3D" id="3.60.110.10">
    <property type="entry name" value="Carbon-nitrogen hydrolase"/>
    <property type="match status" value="1"/>
</dbReference>
<dbReference type="HAMAP" id="MF_01148">
    <property type="entry name" value="Lnt"/>
    <property type="match status" value="1"/>
</dbReference>
<dbReference type="InterPro" id="IPR004563">
    <property type="entry name" value="Apolipo_AcylTrfase"/>
</dbReference>
<dbReference type="InterPro" id="IPR003010">
    <property type="entry name" value="C-N_Hydrolase"/>
</dbReference>
<dbReference type="InterPro" id="IPR036526">
    <property type="entry name" value="C-N_Hydrolase_sf"/>
</dbReference>
<dbReference type="InterPro" id="IPR045378">
    <property type="entry name" value="LNT_N"/>
</dbReference>
<dbReference type="NCBIfam" id="TIGR00546">
    <property type="entry name" value="lnt"/>
    <property type="match status" value="1"/>
</dbReference>
<dbReference type="PANTHER" id="PTHR38686">
    <property type="entry name" value="APOLIPOPROTEIN N-ACYLTRANSFERASE"/>
    <property type="match status" value="1"/>
</dbReference>
<dbReference type="PANTHER" id="PTHR38686:SF1">
    <property type="entry name" value="APOLIPOPROTEIN N-ACYLTRANSFERASE"/>
    <property type="match status" value="1"/>
</dbReference>
<dbReference type="Pfam" id="PF00795">
    <property type="entry name" value="CN_hydrolase"/>
    <property type="match status" value="1"/>
</dbReference>
<dbReference type="Pfam" id="PF20154">
    <property type="entry name" value="LNT_N"/>
    <property type="match status" value="1"/>
</dbReference>
<dbReference type="SUPFAM" id="SSF56317">
    <property type="entry name" value="Carbon-nitrogen hydrolase"/>
    <property type="match status" value="1"/>
</dbReference>
<dbReference type="PROSITE" id="PS50263">
    <property type="entry name" value="CN_HYDROLASE"/>
    <property type="match status" value="1"/>
</dbReference>
<sequence length="506" mass="56226">MWRLPPKSNANAKVLSRWLLFVGLGIAGWGTQLALPPVSGWFLAFVGIVPLWWQCQVLAPLWAAIAGLCWGWGFYGSSLVWVWDLHPLTWIGIDPVPSWLISRGIWLCLSSWGAVLSGSWALLMARYGVRRSAPWQLLWGVTLWCALEALWSHSPLWWISLSLTQSPGGLVQLGRLAGPTTITAVVMTVNGLVTLSLRQQKWARVGLAMTLVAAIALNGVLSVRVMADRGEPLRVGLIQGNIPTREKLTPEGIRRAWQVYLQGYHQLVSWGVDAVLTPEGALPILWQPQQMNPITEAVREAGVPLWLGTFMETAGGSHQVLLSLDGNGEIDSHYGKVNLVPLGEYIPPWLGGVVQRLSTLRSPLIPGDPEQVFTTPWGNAVVLICFESAFSHRSRWQLVHGGQFILSVANDDPYHRQLMTQHHGHDVLRAVEGDRWLVRCTNTGLSAVIAPTGETLWLSKADEFVIYAATIFRRQTETLYTRYGDWLLPLLLGMLSLSVLRQRGWH</sequence>
<reference key="1">
    <citation type="journal article" date="2002" name="DNA Res.">
        <title>Complete genome structure of the thermophilic cyanobacterium Thermosynechococcus elongatus BP-1.</title>
        <authorList>
            <person name="Nakamura Y."/>
            <person name="Kaneko T."/>
            <person name="Sato S."/>
            <person name="Ikeuchi M."/>
            <person name="Katoh H."/>
            <person name="Sasamoto S."/>
            <person name="Watanabe A."/>
            <person name="Iriguchi M."/>
            <person name="Kawashima K."/>
            <person name="Kimura T."/>
            <person name="Kishida Y."/>
            <person name="Kiyokawa C."/>
            <person name="Kohara M."/>
            <person name="Matsumoto M."/>
            <person name="Matsuno A."/>
            <person name="Nakazaki N."/>
            <person name="Shimpo S."/>
            <person name="Sugimoto M."/>
            <person name="Takeuchi C."/>
            <person name="Yamada M."/>
            <person name="Tabata S."/>
        </authorList>
    </citation>
    <scope>NUCLEOTIDE SEQUENCE [LARGE SCALE GENOMIC DNA]</scope>
    <source>
        <strain>NIES-2133 / IAM M-273 / BP-1</strain>
    </source>
</reference>
<organism>
    <name type="scientific">Thermosynechococcus vestitus (strain NIES-2133 / IAM M-273 / BP-1)</name>
    <dbReference type="NCBI Taxonomy" id="197221"/>
    <lineage>
        <taxon>Bacteria</taxon>
        <taxon>Bacillati</taxon>
        <taxon>Cyanobacteriota</taxon>
        <taxon>Cyanophyceae</taxon>
        <taxon>Acaryochloridales</taxon>
        <taxon>Thermosynechococcaceae</taxon>
        <taxon>Thermosynechococcus</taxon>
    </lineage>
</organism>